<sequence length="504" mass="57788">MESGVRILSLLILLHNSLASESEESRLIKHLFTSYDQKARPSKGLDDVVPVTLKLTLTNLIDLNEKEETLTTNVWVQIAWNDDRLVWNVTDYGGIGFVPVPHDIMWLPDIVLENNIDGNFEVAYYANVLVYNTGYIYWLPPAIFRSTCNIEITYFPFDWQNCSLVFRSKTYSANEIDLQLVTDDETGLPFDQVDIDREAFTENGEWAIMHRPARKILNPKYSKEDLRYQEIVFNLIIQRKPLFYIINIIVPCVLISFLVVLVYFLPAKAGGQKCTVSISVLLAQTVFLFLIAQMVPETSLSVPLIGKYLMFVMFVSTLIVLSCVIVLNVSLRSPSTHNLSTKVKHMLLEVLPQFLHLRVEPCDEGEETPRERRRSSLGIMLKAEEYVLKKPRSELMFERQRERHGMRREPDGYRADGFDVGVTTTLYRNLAQCAPEIKDCVDACNFITQNTKEQNRTGSEMENWILIGKVLDVLCFWVALPLFVLGTLAIFLMGHFNTAPEHPF</sequence>
<protein>
    <recommendedName>
        <fullName>Acetylcholine receptor subunit epsilon</fullName>
    </recommendedName>
</protein>
<reference key="1">
    <citation type="journal article" date="1995" name="Neuron">
        <title>A single site on the epsilon subunit is responsible for the change in ACh receptor channel conductance during skeletal muscle development.</title>
        <authorList>
            <person name="Murray N."/>
            <person name="Zheng Y.C."/>
            <person name="Mandel G."/>
            <person name="Brehm P."/>
            <person name="Bolinger R."/>
            <person name="Reuer Q."/>
            <person name="Kullberg R.W."/>
        </authorList>
    </citation>
    <scope>NUCLEOTIDE SEQUENCE [MRNA]</scope>
    <scope>RETRACTED PAPER</scope>
</reference>
<reference key="2">
    <citation type="journal article" date="1998" name="Neuron">
        <authorList>
            <person name="Murray N."/>
            <person name="Zheng Y.C."/>
            <person name="Mandel G."/>
            <person name="Brehm P."/>
            <person name="Bolinger R."/>
            <person name="Reuer Q."/>
            <person name="Kullberg R.W."/>
        </authorList>
    </citation>
    <scope>ERRATUM OF PUBMED:7718247</scope>
    <scope>RETRACTION NOTICE OF PUBMED:7718247</scope>
</reference>
<dbReference type="EMBL" id="U19612">
    <property type="protein sequence ID" value="AAA92687.1"/>
    <property type="molecule type" value="mRNA"/>
</dbReference>
<dbReference type="RefSeq" id="NP_001080916.1">
    <property type="nucleotide sequence ID" value="NM_001087447.1"/>
</dbReference>
<dbReference type="SMR" id="P49580"/>
<dbReference type="GlyCosmos" id="P49580">
    <property type="glycosylation" value="2 sites, No reported glycans"/>
</dbReference>
<dbReference type="GeneID" id="386670"/>
<dbReference type="KEGG" id="xla:386670"/>
<dbReference type="AGR" id="Xenbase:XB-GENE-979689"/>
<dbReference type="CTD" id="386670"/>
<dbReference type="Xenbase" id="XB-GENE-979689">
    <property type="gene designation" value="chrne.L"/>
</dbReference>
<dbReference type="OrthoDB" id="5975154at2759"/>
<dbReference type="Proteomes" id="UP000186698">
    <property type="component" value="Chromosome 3L"/>
</dbReference>
<dbReference type="Bgee" id="386670">
    <property type="expression patterns" value="Expressed in muscle tissue and 6 other cell types or tissues"/>
</dbReference>
<dbReference type="GO" id="GO:0005892">
    <property type="term" value="C:acetylcholine-gated channel complex"/>
    <property type="evidence" value="ECO:0000318"/>
    <property type="project" value="GO_Central"/>
</dbReference>
<dbReference type="GO" id="GO:0043005">
    <property type="term" value="C:neuron projection"/>
    <property type="evidence" value="ECO:0000318"/>
    <property type="project" value="GO_Central"/>
</dbReference>
<dbReference type="GO" id="GO:0005886">
    <property type="term" value="C:plasma membrane"/>
    <property type="evidence" value="ECO:0000318"/>
    <property type="project" value="GO_Central"/>
</dbReference>
<dbReference type="GO" id="GO:0045211">
    <property type="term" value="C:postsynaptic membrane"/>
    <property type="evidence" value="ECO:0007669"/>
    <property type="project" value="UniProtKB-SubCell"/>
</dbReference>
<dbReference type="GO" id="GO:0045202">
    <property type="term" value="C:synapse"/>
    <property type="evidence" value="ECO:0000318"/>
    <property type="project" value="GO_Central"/>
</dbReference>
<dbReference type="GO" id="GO:0015464">
    <property type="term" value="F:acetylcholine receptor activity"/>
    <property type="evidence" value="ECO:0000318"/>
    <property type="project" value="GO_Central"/>
</dbReference>
<dbReference type="GO" id="GO:0022848">
    <property type="term" value="F:acetylcholine-gated monoatomic cation-selective channel activity"/>
    <property type="evidence" value="ECO:0000318"/>
    <property type="project" value="GO_Central"/>
</dbReference>
<dbReference type="GO" id="GO:1904315">
    <property type="term" value="F:transmitter-gated monoatomic ion channel activity involved in regulation of postsynaptic membrane potential"/>
    <property type="evidence" value="ECO:0000250"/>
    <property type="project" value="UniProtKB"/>
</dbReference>
<dbReference type="GO" id="GO:0095500">
    <property type="term" value="P:acetylcholine receptor signaling pathway"/>
    <property type="evidence" value="ECO:0000318"/>
    <property type="project" value="GO_Central"/>
</dbReference>
<dbReference type="GO" id="GO:0007268">
    <property type="term" value="P:chemical synaptic transmission"/>
    <property type="evidence" value="ECO:0000318"/>
    <property type="project" value="GO_Central"/>
</dbReference>
<dbReference type="GO" id="GO:0051899">
    <property type="term" value="P:membrane depolarization"/>
    <property type="evidence" value="ECO:0000318"/>
    <property type="project" value="GO_Central"/>
</dbReference>
<dbReference type="GO" id="GO:0034220">
    <property type="term" value="P:monoatomic ion transmembrane transport"/>
    <property type="evidence" value="ECO:0000318"/>
    <property type="project" value="GO_Central"/>
</dbReference>
<dbReference type="CDD" id="cd19029">
    <property type="entry name" value="LGIC_ECD_nAChR_G"/>
    <property type="match status" value="1"/>
</dbReference>
<dbReference type="CDD" id="cd19064">
    <property type="entry name" value="LGIC_TM_nAChR"/>
    <property type="match status" value="1"/>
</dbReference>
<dbReference type="FunFam" id="1.20.58.390:FF:000048">
    <property type="entry name" value="Cholinergic receptor nicotinic epsilon subunit"/>
    <property type="match status" value="1"/>
</dbReference>
<dbReference type="FunFam" id="1.20.58.390:FF:000010">
    <property type="entry name" value="Nicotinic acetylcholine receptor subunit epsilon"/>
    <property type="match status" value="1"/>
</dbReference>
<dbReference type="FunFam" id="2.70.170.10:FF:000012">
    <property type="entry name" value="Nicotinic acetylcholine receptor subunit gamma"/>
    <property type="match status" value="1"/>
</dbReference>
<dbReference type="Gene3D" id="2.70.170.10">
    <property type="entry name" value="Neurotransmitter-gated ion-channel ligand-binding domain"/>
    <property type="match status" value="1"/>
</dbReference>
<dbReference type="Gene3D" id="1.20.58.390">
    <property type="entry name" value="Neurotransmitter-gated ion-channel transmembrane domain"/>
    <property type="match status" value="2"/>
</dbReference>
<dbReference type="InterPro" id="IPR006202">
    <property type="entry name" value="Neur_chan_lig-bd"/>
</dbReference>
<dbReference type="InterPro" id="IPR036734">
    <property type="entry name" value="Neur_chan_lig-bd_sf"/>
</dbReference>
<dbReference type="InterPro" id="IPR006201">
    <property type="entry name" value="Neur_channel"/>
</dbReference>
<dbReference type="InterPro" id="IPR036719">
    <property type="entry name" value="Neuro-gated_channel_TM_sf"/>
</dbReference>
<dbReference type="InterPro" id="IPR038050">
    <property type="entry name" value="Neuro_actylchol_rec"/>
</dbReference>
<dbReference type="InterPro" id="IPR006029">
    <property type="entry name" value="Neurotrans-gated_channel_TM"/>
</dbReference>
<dbReference type="InterPro" id="IPR018000">
    <property type="entry name" value="Neurotransmitter_ion_chnl_CS"/>
</dbReference>
<dbReference type="InterPro" id="IPR002394">
    <property type="entry name" value="Nicotinic_acetylcholine_rcpt"/>
</dbReference>
<dbReference type="PANTHER" id="PTHR18945">
    <property type="entry name" value="NEUROTRANSMITTER GATED ION CHANNEL"/>
    <property type="match status" value="1"/>
</dbReference>
<dbReference type="Pfam" id="PF02931">
    <property type="entry name" value="Neur_chan_LBD"/>
    <property type="match status" value="1"/>
</dbReference>
<dbReference type="Pfam" id="PF02932">
    <property type="entry name" value="Neur_chan_memb"/>
    <property type="match status" value="1"/>
</dbReference>
<dbReference type="PRINTS" id="PR00254">
    <property type="entry name" value="NICOTINICR"/>
</dbReference>
<dbReference type="PRINTS" id="PR00252">
    <property type="entry name" value="NRIONCHANNEL"/>
</dbReference>
<dbReference type="SUPFAM" id="SSF90112">
    <property type="entry name" value="Neurotransmitter-gated ion-channel transmembrane pore"/>
    <property type="match status" value="1"/>
</dbReference>
<dbReference type="SUPFAM" id="SSF63712">
    <property type="entry name" value="Nicotinic receptor ligand binding domain-like"/>
    <property type="match status" value="1"/>
</dbReference>
<dbReference type="PROSITE" id="PS00236">
    <property type="entry name" value="NEUROTR_ION_CHANNEL"/>
    <property type="match status" value="1"/>
</dbReference>
<feature type="signal peptide" evidence="3">
    <location>
        <begin position="1"/>
        <end position="19"/>
    </location>
</feature>
<feature type="chain" id="PRO_0000000332" description="Acetylcholine receptor subunit epsilon">
    <location>
        <begin position="20"/>
        <end position="504"/>
    </location>
</feature>
<feature type="topological domain" description="Extracellular" evidence="3">
    <location>
        <begin position="20"/>
        <end position="240"/>
    </location>
</feature>
<feature type="transmembrane region" description="Helical" evidence="3">
    <location>
        <begin position="241"/>
        <end position="265"/>
    </location>
</feature>
<feature type="topological domain" description="Cytoplasmic" evidence="3">
    <location>
        <begin position="266"/>
        <end position="273"/>
    </location>
</feature>
<feature type="transmembrane region" description="Helical" evidence="3">
    <location>
        <begin position="274"/>
        <end position="292"/>
    </location>
</feature>
<feature type="topological domain" description="Extracellular" evidence="3">
    <location>
        <begin position="293"/>
        <end position="307"/>
    </location>
</feature>
<feature type="transmembrane region" description="Helical" evidence="3">
    <location>
        <begin position="308"/>
        <end position="329"/>
    </location>
</feature>
<feature type="topological domain" description="Cytoplasmic" evidence="3">
    <location>
        <begin position="330"/>
        <end position="473"/>
    </location>
</feature>
<feature type="transmembrane region" description="Helical" evidence="3">
    <location>
        <begin position="474"/>
        <end position="497"/>
    </location>
</feature>
<feature type="topological domain" description="Extracellular" evidence="3">
    <location>
        <begin position="498"/>
        <end position="504"/>
    </location>
</feature>
<feature type="glycosylation site" description="N-linked (GlcNAc...) asparagine" evidence="3">
    <location>
        <position position="88"/>
    </location>
</feature>
<feature type="glycosylation site" description="N-linked (GlcNAc...) asparagine" evidence="3">
    <location>
        <position position="161"/>
    </location>
</feature>
<feature type="disulfide bond" evidence="1">
    <location>
        <begin position="148"/>
        <end position="162"/>
    </location>
</feature>
<organism>
    <name type="scientific">Xenopus laevis</name>
    <name type="common">African clawed frog</name>
    <dbReference type="NCBI Taxonomy" id="8355"/>
    <lineage>
        <taxon>Eukaryota</taxon>
        <taxon>Metazoa</taxon>
        <taxon>Chordata</taxon>
        <taxon>Craniata</taxon>
        <taxon>Vertebrata</taxon>
        <taxon>Euteleostomi</taxon>
        <taxon>Amphibia</taxon>
        <taxon>Batrachia</taxon>
        <taxon>Anura</taxon>
        <taxon>Pipoidea</taxon>
        <taxon>Pipidae</taxon>
        <taxon>Xenopodinae</taxon>
        <taxon>Xenopus</taxon>
        <taxon>Xenopus</taxon>
    </lineage>
</organism>
<proteinExistence type="evidence at transcript level"/>
<comment type="function">
    <text>After binding acetylcholine, the AChR responds by an extensive change in conformation that affects all subunits and leads to opening of an ion-conducting channel across the plasma membrane.</text>
</comment>
<comment type="catalytic activity">
    <reaction evidence="2">
        <text>K(+)(in) = K(+)(out)</text>
        <dbReference type="Rhea" id="RHEA:29463"/>
        <dbReference type="ChEBI" id="CHEBI:29103"/>
    </reaction>
</comment>
<comment type="catalytic activity">
    <reaction evidence="2">
        <text>Na(+)(in) = Na(+)(out)</text>
        <dbReference type="Rhea" id="RHEA:34963"/>
        <dbReference type="ChEBI" id="CHEBI:29101"/>
    </reaction>
</comment>
<comment type="subunit">
    <text>Pentamer of two alpha chains, and one each of the beta, delta, and gamma (in immature muscle) or epsilon (in mature muscle) chains.</text>
</comment>
<comment type="subcellular location">
    <subcellularLocation>
        <location>Postsynaptic cell membrane</location>
        <topology>Multi-pass membrane protein</topology>
    </subcellularLocation>
    <subcellularLocation>
        <location>Cell membrane</location>
        <topology>Multi-pass membrane protein</topology>
    </subcellularLocation>
</comment>
<comment type="similarity">
    <text evidence="4">Belongs to the ligand-gated ion channel (TC 1.A.9) family. Acetylcholine receptor (TC 1.A.9.1) subfamily. Epsilon/CHRNE sub-subfamily.</text>
</comment>
<keyword id="KW-1003">Cell membrane</keyword>
<keyword id="KW-1015">Disulfide bond</keyword>
<keyword id="KW-0325">Glycoprotein</keyword>
<keyword id="KW-0407">Ion channel</keyword>
<keyword id="KW-0406">Ion transport</keyword>
<keyword id="KW-1071">Ligand-gated ion channel</keyword>
<keyword id="KW-0472">Membrane</keyword>
<keyword id="KW-0628">Postsynaptic cell membrane</keyword>
<keyword id="KW-0675">Receptor</keyword>
<keyword id="KW-1185">Reference proteome</keyword>
<keyword id="KW-0732">Signal</keyword>
<keyword id="KW-0770">Synapse</keyword>
<keyword id="KW-0812">Transmembrane</keyword>
<keyword id="KW-1133">Transmembrane helix</keyword>
<keyword id="KW-0813">Transport</keyword>
<gene>
    <name type="primary">chrne</name>
</gene>
<accession>P49580</accession>
<evidence type="ECO:0000250" key="1"/>
<evidence type="ECO:0000250" key="2">
    <source>
        <dbReference type="UniProtKB" id="P02715"/>
    </source>
</evidence>
<evidence type="ECO:0000255" key="3"/>
<evidence type="ECO:0000305" key="4"/>
<name>ACHE_XENLA</name>